<organism>
    <name type="scientific">Treponema pallidum (strain Nichols)</name>
    <dbReference type="NCBI Taxonomy" id="243276"/>
    <lineage>
        <taxon>Bacteria</taxon>
        <taxon>Pseudomonadati</taxon>
        <taxon>Spirochaetota</taxon>
        <taxon>Spirochaetia</taxon>
        <taxon>Spirochaetales</taxon>
        <taxon>Treponemataceae</taxon>
        <taxon>Treponema</taxon>
    </lineage>
</organism>
<keyword id="KW-0227">DNA damage</keyword>
<keyword id="KW-0234">DNA repair</keyword>
<keyword id="KW-0235">DNA replication</keyword>
<keyword id="KW-0436">Ligase</keyword>
<keyword id="KW-0460">Magnesium</keyword>
<keyword id="KW-0464">Manganese</keyword>
<keyword id="KW-0479">Metal-binding</keyword>
<keyword id="KW-0520">NAD</keyword>
<keyword id="KW-1185">Reference proteome</keyword>
<keyword id="KW-0677">Repeat</keyword>
<keyword id="KW-0862">Zinc</keyword>
<evidence type="ECO:0000255" key="1">
    <source>
        <dbReference type="HAMAP-Rule" id="MF_01588"/>
    </source>
</evidence>
<gene>
    <name evidence="1" type="primary">ligA</name>
    <name type="synonym">lig</name>
    <name type="ordered locus">TP_0634</name>
</gene>
<dbReference type="EC" id="6.5.1.2" evidence="1"/>
<dbReference type="EMBL" id="AE000520">
    <property type="protein sequence ID" value="AAC65609.1"/>
    <property type="molecule type" value="Genomic_DNA"/>
</dbReference>
<dbReference type="PIR" id="H71300">
    <property type="entry name" value="H71300"/>
</dbReference>
<dbReference type="RefSeq" id="WP_010882080.1">
    <property type="nucleotide sequence ID" value="NC_021490.2"/>
</dbReference>
<dbReference type="SMR" id="O83642"/>
<dbReference type="IntAct" id="O83642">
    <property type="interactions" value="15"/>
</dbReference>
<dbReference type="STRING" id="243276.TP_0634"/>
<dbReference type="EnsemblBacteria" id="AAC65609">
    <property type="protein sequence ID" value="AAC65609"/>
    <property type="gene ID" value="TP_0634"/>
</dbReference>
<dbReference type="GeneID" id="93876401"/>
<dbReference type="KEGG" id="tpa:TP_0634"/>
<dbReference type="KEGG" id="tpw:TPANIC_0634"/>
<dbReference type="eggNOG" id="COG0272">
    <property type="taxonomic scope" value="Bacteria"/>
</dbReference>
<dbReference type="HOGENOM" id="CLU_007764_2_3_12"/>
<dbReference type="OrthoDB" id="9759736at2"/>
<dbReference type="Proteomes" id="UP000000811">
    <property type="component" value="Chromosome"/>
</dbReference>
<dbReference type="GO" id="GO:0003677">
    <property type="term" value="F:DNA binding"/>
    <property type="evidence" value="ECO:0007669"/>
    <property type="project" value="InterPro"/>
</dbReference>
<dbReference type="GO" id="GO:0003911">
    <property type="term" value="F:DNA ligase (NAD+) activity"/>
    <property type="evidence" value="ECO:0007669"/>
    <property type="project" value="UniProtKB-UniRule"/>
</dbReference>
<dbReference type="GO" id="GO:0046872">
    <property type="term" value="F:metal ion binding"/>
    <property type="evidence" value="ECO:0007669"/>
    <property type="project" value="UniProtKB-KW"/>
</dbReference>
<dbReference type="GO" id="GO:0006281">
    <property type="term" value="P:DNA repair"/>
    <property type="evidence" value="ECO:0007669"/>
    <property type="project" value="UniProtKB-KW"/>
</dbReference>
<dbReference type="GO" id="GO:0006260">
    <property type="term" value="P:DNA replication"/>
    <property type="evidence" value="ECO:0007669"/>
    <property type="project" value="UniProtKB-KW"/>
</dbReference>
<dbReference type="CDD" id="cd17748">
    <property type="entry name" value="BRCT_DNA_ligase_like"/>
    <property type="match status" value="3"/>
</dbReference>
<dbReference type="CDD" id="cd00114">
    <property type="entry name" value="LIGANc"/>
    <property type="match status" value="1"/>
</dbReference>
<dbReference type="Gene3D" id="1.10.150.20">
    <property type="entry name" value="5' to 3' exonuclease, C-terminal subdomain"/>
    <property type="match status" value="2"/>
</dbReference>
<dbReference type="Gene3D" id="3.40.50.10190">
    <property type="entry name" value="BRCT domain"/>
    <property type="match status" value="3"/>
</dbReference>
<dbReference type="Gene3D" id="3.30.470.30">
    <property type="entry name" value="DNA ligase/mRNA capping enzyme"/>
    <property type="match status" value="1"/>
</dbReference>
<dbReference type="Gene3D" id="1.10.287.610">
    <property type="entry name" value="Helix hairpin bin"/>
    <property type="match status" value="1"/>
</dbReference>
<dbReference type="Gene3D" id="2.40.50.140">
    <property type="entry name" value="Nucleic acid-binding proteins"/>
    <property type="match status" value="1"/>
</dbReference>
<dbReference type="HAMAP" id="MF_01588">
    <property type="entry name" value="DNA_ligase_A"/>
    <property type="match status" value="1"/>
</dbReference>
<dbReference type="InterPro" id="IPR001357">
    <property type="entry name" value="BRCT_dom"/>
</dbReference>
<dbReference type="InterPro" id="IPR036420">
    <property type="entry name" value="BRCT_dom_sf"/>
</dbReference>
<dbReference type="InterPro" id="IPR001679">
    <property type="entry name" value="DNA_ligase"/>
</dbReference>
<dbReference type="InterPro" id="IPR018239">
    <property type="entry name" value="DNA_ligase_AS"/>
</dbReference>
<dbReference type="InterPro" id="IPR013839">
    <property type="entry name" value="DNAligase_adenylation"/>
</dbReference>
<dbReference type="InterPro" id="IPR013840">
    <property type="entry name" value="DNAligase_N"/>
</dbReference>
<dbReference type="InterPro" id="IPR003583">
    <property type="entry name" value="Hlx-hairpin-Hlx_DNA-bd_motif"/>
</dbReference>
<dbReference type="InterPro" id="IPR012340">
    <property type="entry name" value="NA-bd_OB-fold"/>
</dbReference>
<dbReference type="InterPro" id="IPR004150">
    <property type="entry name" value="NAD_DNA_ligase_OB"/>
</dbReference>
<dbReference type="InterPro" id="IPR010994">
    <property type="entry name" value="RuvA_2-like"/>
</dbReference>
<dbReference type="NCBIfam" id="TIGR00575">
    <property type="entry name" value="dnlj"/>
    <property type="match status" value="1"/>
</dbReference>
<dbReference type="PANTHER" id="PTHR13561">
    <property type="entry name" value="DNA REPLICATION REGULATOR DPB11-RELATED"/>
    <property type="match status" value="1"/>
</dbReference>
<dbReference type="PANTHER" id="PTHR13561:SF20">
    <property type="entry name" value="DNA TOPOISOMERASE 2-BINDING PROTEIN 1"/>
    <property type="match status" value="1"/>
</dbReference>
<dbReference type="Pfam" id="PF00533">
    <property type="entry name" value="BRCT"/>
    <property type="match status" value="3"/>
</dbReference>
<dbReference type="Pfam" id="PF01653">
    <property type="entry name" value="DNA_ligase_aden"/>
    <property type="match status" value="1"/>
</dbReference>
<dbReference type="Pfam" id="PF03120">
    <property type="entry name" value="DNA_ligase_OB"/>
    <property type="match status" value="1"/>
</dbReference>
<dbReference type="Pfam" id="PF14520">
    <property type="entry name" value="HHH_5"/>
    <property type="match status" value="1"/>
</dbReference>
<dbReference type="PIRSF" id="PIRSF001604">
    <property type="entry name" value="LigA"/>
    <property type="match status" value="1"/>
</dbReference>
<dbReference type="SMART" id="SM00292">
    <property type="entry name" value="BRCT"/>
    <property type="match status" value="3"/>
</dbReference>
<dbReference type="SMART" id="SM00278">
    <property type="entry name" value="HhH1"/>
    <property type="match status" value="2"/>
</dbReference>
<dbReference type="SMART" id="SM00532">
    <property type="entry name" value="LIGANc"/>
    <property type="match status" value="1"/>
</dbReference>
<dbReference type="SUPFAM" id="SSF52113">
    <property type="entry name" value="BRCT domain"/>
    <property type="match status" value="3"/>
</dbReference>
<dbReference type="SUPFAM" id="SSF56091">
    <property type="entry name" value="DNA ligase/mRNA capping enzyme, catalytic domain"/>
    <property type="match status" value="1"/>
</dbReference>
<dbReference type="SUPFAM" id="SSF50249">
    <property type="entry name" value="Nucleic acid-binding proteins"/>
    <property type="match status" value="1"/>
</dbReference>
<dbReference type="SUPFAM" id="SSF47781">
    <property type="entry name" value="RuvA domain 2-like"/>
    <property type="match status" value="1"/>
</dbReference>
<dbReference type="PROSITE" id="PS50172">
    <property type="entry name" value="BRCT"/>
    <property type="match status" value="3"/>
</dbReference>
<dbReference type="PROSITE" id="PS01055">
    <property type="entry name" value="DNA_LIGASE_N1"/>
    <property type="match status" value="1"/>
</dbReference>
<accession>O83642</accession>
<comment type="function">
    <text evidence="1">DNA ligase that catalyzes the formation of phosphodiester linkages between 5'-phosphoryl and 3'-hydroxyl groups in double-stranded DNA using NAD as a coenzyme and as the energy source for the reaction. It is essential for DNA replication and repair of damaged DNA.</text>
</comment>
<comment type="catalytic activity">
    <reaction evidence="1">
        <text>NAD(+) + (deoxyribonucleotide)n-3'-hydroxyl + 5'-phospho-(deoxyribonucleotide)m = (deoxyribonucleotide)n+m + AMP + beta-nicotinamide D-nucleotide.</text>
        <dbReference type="EC" id="6.5.1.2"/>
    </reaction>
</comment>
<comment type="cofactor">
    <cofactor evidence="1">
        <name>Mg(2+)</name>
        <dbReference type="ChEBI" id="CHEBI:18420"/>
    </cofactor>
    <cofactor evidence="1">
        <name>Mn(2+)</name>
        <dbReference type="ChEBI" id="CHEBI:29035"/>
    </cofactor>
</comment>
<comment type="similarity">
    <text evidence="1">Belongs to the NAD-dependent DNA ligase family. LigA subfamily.</text>
</comment>
<proteinExistence type="inferred from homology"/>
<name>DNLJ_TREPA</name>
<protein>
    <recommendedName>
        <fullName evidence="1">DNA ligase</fullName>
        <ecNumber evidence="1">6.5.1.2</ecNumber>
    </recommendedName>
    <alternativeName>
        <fullName evidence="1">Polydeoxyribonucleotide synthase [NAD(+)]</fullName>
    </alternativeName>
</protein>
<feature type="chain" id="PRO_0000161774" description="DNA ligase">
    <location>
        <begin position="1"/>
        <end position="823"/>
    </location>
</feature>
<feature type="domain" description="BRCT 1" evidence="1">
    <location>
        <begin position="562"/>
        <end position="655"/>
    </location>
</feature>
<feature type="domain" description="BRCT 2" evidence="1">
    <location>
        <begin position="654"/>
        <end position="742"/>
    </location>
</feature>
<feature type="domain" description="BRCT 3" evidence="1">
    <location>
        <begin position="741"/>
        <end position="823"/>
    </location>
</feature>
<feature type="active site" description="N6-AMP-lysine intermediate" evidence="1">
    <location>
        <position position="100"/>
    </location>
</feature>
<feature type="binding site" evidence="1">
    <location>
        <begin position="31"/>
        <end position="35"/>
    </location>
    <ligand>
        <name>NAD(+)</name>
        <dbReference type="ChEBI" id="CHEBI:57540"/>
    </ligand>
</feature>
<feature type="binding site" evidence="1">
    <location>
        <begin position="73"/>
        <end position="74"/>
    </location>
    <ligand>
        <name>NAD(+)</name>
        <dbReference type="ChEBI" id="CHEBI:57540"/>
    </ligand>
</feature>
<feature type="binding site" evidence="1">
    <location>
        <position position="121"/>
    </location>
    <ligand>
        <name>NAD(+)</name>
        <dbReference type="ChEBI" id="CHEBI:57540"/>
    </ligand>
</feature>
<feature type="binding site" evidence="1">
    <location>
        <position position="163"/>
    </location>
    <ligand>
        <name>NAD(+)</name>
        <dbReference type="ChEBI" id="CHEBI:57540"/>
    </ligand>
</feature>
<feature type="binding site" evidence="1">
    <location>
        <position position="275"/>
    </location>
    <ligand>
        <name>NAD(+)</name>
        <dbReference type="ChEBI" id="CHEBI:57540"/>
    </ligand>
</feature>
<feature type="binding site" evidence="1">
    <location>
        <position position="296"/>
    </location>
    <ligand>
        <name>NAD(+)</name>
        <dbReference type="ChEBI" id="CHEBI:57540"/>
    </ligand>
</feature>
<feature type="binding site" evidence="1">
    <location>
        <position position="387"/>
    </location>
    <ligand>
        <name>Zn(2+)</name>
        <dbReference type="ChEBI" id="CHEBI:29105"/>
    </ligand>
</feature>
<feature type="binding site" evidence="1">
    <location>
        <position position="390"/>
    </location>
    <ligand>
        <name>Zn(2+)</name>
        <dbReference type="ChEBI" id="CHEBI:29105"/>
    </ligand>
</feature>
<feature type="binding site" evidence="1">
    <location>
        <position position="403"/>
    </location>
    <ligand>
        <name>Zn(2+)</name>
        <dbReference type="ChEBI" id="CHEBI:29105"/>
    </ligand>
</feature>
<feature type="binding site" evidence="1">
    <location>
        <position position="408"/>
    </location>
    <ligand>
        <name>Zn(2+)</name>
        <dbReference type="ChEBI" id="CHEBI:29105"/>
    </ligand>
</feature>
<sequence length="823" mass="91098">MSTAQRRVQELEKLILHHQDRYYNAESDISDDAFDALWEELARLDPGNPLLKAIGSDSQRDAVKKRHIVPMGSQHKAADEESFSAWAKKNALQAFLVQHKLDGVSLELQYERGHFCCALTRGNGIVGDDVTANVRGMRGFVPTLTAEWGPCGNLPFTGGVRGEVIMHKDIHRSHYPTHANCRNTVNGILKRKDGRGRTHLHIVCYDAVPGTPGKPFTGSLPFADETEKLAWLARQGFVTVHSHRCANAQEVVALRSEIMRTRELLPYSIDGLVVKSTDLDFQDAQLPRPKKQIAFKFSTQEAITTLRDVQWQTSGVTYTPIGITDPVRLAGTTVKRANLCNPNMLTKLCLKIGSHVLISKRGEIIPKIEALVSTPAHAQEIHIPTQCTSCNTVLENSGSRLFCPNVNCPLLSHHRITRWIECLEIKHVGTELIQRLFEEKKVRRIPDLYTLTCEDLIEIEHVGNATAKKILEAIHHKKEIALQTFIAGFGIEGIGETMGEKLICAGFDTLEKVLHATTETLESIYQFGTELAKSVVTGIARVKDDMCELLDRGFVRILAKQQAESPLRGKSFCFSGSLRNGDRATIHRIRALGGVVRTSVTRDLSYLIFESLSQPYRTAQKLKKEQGVALEIISEDEFCRLLDQASASCTHTGETVHPLQGKSFYFSGASRSMNHKHAQEKVRALGGDVASSVTAQLDYLVFYSQSTRYRTACALGIQIISEETLHKLIATAQSPLHTDAHVHAPLHGMSFCFSGDLDGMTRAQAIALVQRLGGTVKTAVSTQLTYLVSNDPHGQSRKCQNAVRCGVRIISEHVFLALCTPGT</sequence>
<reference key="1">
    <citation type="journal article" date="1998" name="Science">
        <title>Complete genome sequence of Treponema pallidum, the syphilis spirochete.</title>
        <authorList>
            <person name="Fraser C.M."/>
            <person name="Norris S.J."/>
            <person name="Weinstock G.M."/>
            <person name="White O."/>
            <person name="Sutton G.G."/>
            <person name="Dodson R.J."/>
            <person name="Gwinn M.L."/>
            <person name="Hickey E.K."/>
            <person name="Clayton R.A."/>
            <person name="Ketchum K.A."/>
            <person name="Sodergren E."/>
            <person name="Hardham J.M."/>
            <person name="McLeod M.P."/>
            <person name="Salzberg S.L."/>
            <person name="Peterson J.D."/>
            <person name="Khalak H.G."/>
            <person name="Richardson D.L."/>
            <person name="Howell J.K."/>
            <person name="Chidambaram M."/>
            <person name="Utterback T.R."/>
            <person name="McDonald L.A."/>
            <person name="Artiach P."/>
            <person name="Bowman C."/>
            <person name="Cotton M.D."/>
            <person name="Fujii C."/>
            <person name="Garland S.A."/>
            <person name="Hatch B."/>
            <person name="Horst K."/>
            <person name="Roberts K.M."/>
            <person name="Sandusky M."/>
            <person name="Weidman J.F."/>
            <person name="Smith H.O."/>
            <person name="Venter J.C."/>
        </authorList>
    </citation>
    <scope>NUCLEOTIDE SEQUENCE [LARGE SCALE GENOMIC DNA]</scope>
    <source>
        <strain>Nichols</strain>
    </source>
</reference>